<proteinExistence type="inferred from homology"/>
<protein>
    <recommendedName>
        <fullName evidence="1">Ribosome maturation factor RimP</fullName>
    </recommendedName>
</protein>
<name>RIMP_CHLP8</name>
<evidence type="ECO:0000255" key="1">
    <source>
        <dbReference type="HAMAP-Rule" id="MF_01077"/>
    </source>
</evidence>
<comment type="function">
    <text evidence="1">Required for maturation of 30S ribosomal subunits.</text>
</comment>
<comment type="subcellular location">
    <subcellularLocation>
        <location evidence="1">Cytoplasm</location>
    </subcellularLocation>
</comment>
<comment type="similarity">
    <text evidence="1">Belongs to the RimP family.</text>
</comment>
<organism>
    <name type="scientific">Chlorobaculum parvum (strain DSM 263 / NCIMB 8327)</name>
    <name type="common">Chlorobium vibrioforme subsp. thiosulfatophilum</name>
    <dbReference type="NCBI Taxonomy" id="517417"/>
    <lineage>
        <taxon>Bacteria</taxon>
        <taxon>Pseudomonadati</taxon>
        <taxon>Chlorobiota</taxon>
        <taxon>Chlorobiia</taxon>
        <taxon>Chlorobiales</taxon>
        <taxon>Chlorobiaceae</taxon>
        <taxon>Chlorobaculum</taxon>
    </lineage>
</organism>
<keyword id="KW-0963">Cytoplasm</keyword>
<keyword id="KW-0690">Ribosome biogenesis</keyword>
<accession>B3QQI4</accession>
<reference key="1">
    <citation type="submission" date="2008-06" db="EMBL/GenBank/DDBJ databases">
        <title>Complete sequence of Chlorobaculum parvum NCIB 8327.</title>
        <authorList>
            <consortium name="US DOE Joint Genome Institute"/>
            <person name="Lucas S."/>
            <person name="Copeland A."/>
            <person name="Lapidus A."/>
            <person name="Glavina del Rio T."/>
            <person name="Dalin E."/>
            <person name="Tice H."/>
            <person name="Bruce D."/>
            <person name="Goodwin L."/>
            <person name="Pitluck S."/>
            <person name="Schmutz J."/>
            <person name="Larimer F."/>
            <person name="Land M."/>
            <person name="Hauser L."/>
            <person name="Kyrpides N."/>
            <person name="Mikhailova N."/>
            <person name="Zhao F."/>
            <person name="Li T."/>
            <person name="Liu Z."/>
            <person name="Overmann J."/>
            <person name="Bryant D.A."/>
            <person name="Richardson P."/>
        </authorList>
    </citation>
    <scope>NUCLEOTIDE SEQUENCE [LARGE SCALE GENOMIC DNA]</scope>
    <source>
        <strain>DSM 263 / NCIMB 8327</strain>
    </source>
</reference>
<dbReference type="EMBL" id="CP001099">
    <property type="protein sequence ID" value="ACF12187.1"/>
    <property type="molecule type" value="Genomic_DNA"/>
</dbReference>
<dbReference type="RefSeq" id="WP_012503020.1">
    <property type="nucleotide sequence ID" value="NC_011027.1"/>
</dbReference>
<dbReference type="SMR" id="B3QQI4"/>
<dbReference type="STRING" id="517417.Cpar_1795"/>
<dbReference type="KEGG" id="cpc:Cpar_1795"/>
<dbReference type="eggNOG" id="COG0779">
    <property type="taxonomic scope" value="Bacteria"/>
</dbReference>
<dbReference type="HOGENOM" id="CLU_070525_3_1_10"/>
<dbReference type="OrthoDB" id="9789702at2"/>
<dbReference type="Proteomes" id="UP000008811">
    <property type="component" value="Chromosome"/>
</dbReference>
<dbReference type="GO" id="GO:0005829">
    <property type="term" value="C:cytosol"/>
    <property type="evidence" value="ECO:0007669"/>
    <property type="project" value="TreeGrafter"/>
</dbReference>
<dbReference type="GO" id="GO:0000028">
    <property type="term" value="P:ribosomal small subunit assembly"/>
    <property type="evidence" value="ECO:0007669"/>
    <property type="project" value="TreeGrafter"/>
</dbReference>
<dbReference type="GO" id="GO:0006412">
    <property type="term" value="P:translation"/>
    <property type="evidence" value="ECO:0007669"/>
    <property type="project" value="TreeGrafter"/>
</dbReference>
<dbReference type="Gene3D" id="3.30.300.70">
    <property type="entry name" value="RimP-like superfamily, N-terminal"/>
    <property type="match status" value="1"/>
</dbReference>
<dbReference type="HAMAP" id="MF_01077">
    <property type="entry name" value="RimP"/>
    <property type="match status" value="1"/>
</dbReference>
<dbReference type="InterPro" id="IPR003728">
    <property type="entry name" value="Ribosome_maturation_RimP"/>
</dbReference>
<dbReference type="InterPro" id="IPR028998">
    <property type="entry name" value="RimP_C"/>
</dbReference>
<dbReference type="InterPro" id="IPR028989">
    <property type="entry name" value="RimP_N"/>
</dbReference>
<dbReference type="InterPro" id="IPR035956">
    <property type="entry name" value="RimP_N_sf"/>
</dbReference>
<dbReference type="NCBIfam" id="NF011234">
    <property type="entry name" value="PRK14641.1"/>
    <property type="match status" value="1"/>
</dbReference>
<dbReference type="PANTHER" id="PTHR33867">
    <property type="entry name" value="RIBOSOME MATURATION FACTOR RIMP"/>
    <property type="match status" value="1"/>
</dbReference>
<dbReference type="PANTHER" id="PTHR33867:SF1">
    <property type="entry name" value="RIBOSOME MATURATION FACTOR RIMP"/>
    <property type="match status" value="1"/>
</dbReference>
<dbReference type="Pfam" id="PF17384">
    <property type="entry name" value="DUF150_C"/>
    <property type="match status" value="1"/>
</dbReference>
<dbReference type="Pfam" id="PF02576">
    <property type="entry name" value="RimP_N"/>
    <property type="match status" value="1"/>
</dbReference>
<dbReference type="SUPFAM" id="SSF75420">
    <property type="entry name" value="YhbC-like, N-terminal domain"/>
    <property type="match status" value="1"/>
</dbReference>
<sequence>MDEMIRRAIDESIAEVAVATGSDIYLVEADVRGGGRIIELTIEADKGVSIDQCAKLSRTIRARLEACEENLMLAAGDFELMVSSPGIGEPIRVSRQYLRHLGRKMKVVYLDSEGERKEIEGKLTEASLEGEEPSITIEPVVKGKKKKTSGREPLTLRLADVVKAVVQTEW</sequence>
<feature type="chain" id="PRO_0000384625" description="Ribosome maturation factor RimP">
    <location>
        <begin position="1"/>
        <end position="170"/>
    </location>
</feature>
<gene>
    <name evidence="1" type="primary">rimP</name>
    <name type="ordered locus">Cpar_1795</name>
</gene>